<protein>
    <recommendedName>
        <fullName evidence="1">UPF0122 protein OB1530</fullName>
    </recommendedName>
</protein>
<name>Y1530_OCEIH</name>
<comment type="function">
    <text evidence="1">Might take part in the signal recognition particle (SRP) pathway. This is inferred from the conservation of its genetic proximity to ftsY/ffh. May be a regulatory protein.</text>
</comment>
<comment type="similarity">
    <text evidence="1">Belongs to the UPF0122 family.</text>
</comment>
<keyword id="KW-1185">Reference proteome</keyword>
<sequence>MLDKTTRINYLFDFYQELLTPKQRNYMEMYYLEDYSLGEISELFQVSRQAVYDNIKRTEAMLESYEEKLHLYSKFEQRVKLLEKLKLMTTDKHVHEHIQKLKDLD</sequence>
<feature type="chain" id="PRO_0000211874" description="UPF0122 protein OB1530">
    <location>
        <begin position="1"/>
        <end position="105"/>
    </location>
</feature>
<proteinExistence type="inferred from homology"/>
<accession>Q8ER03</accession>
<evidence type="ECO:0000255" key="1">
    <source>
        <dbReference type="HAMAP-Rule" id="MF_00245"/>
    </source>
</evidence>
<gene>
    <name type="ordered locus">OB1530</name>
</gene>
<dbReference type="EMBL" id="BA000028">
    <property type="protein sequence ID" value="BAC13486.1"/>
    <property type="molecule type" value="Genomic_DNA"/>
</dbReference>
<dbReference type="RefSeq" id="WP_011065930.1">
    <property type="nucleotide sequence ID" value="NC_004193.1"/>
</dbReference>
<dbReference type="SMR" id="Q8ER03"/>
<dbReference type="STRING" id="221109.gene:10733770"/>
<dbReference type="KEGG" id="oih:OB1530"/>
<dbReference type="eggNOG" id="COG2739">
    <property type="taxonomic scope" value="Bacteria"/>
</dbReference>
<dbReference type="HOGENOM" id="CLU_129218_1_0_9"/>
<dbReference type="OrthoDB" id="6392at2"/>
<dbReference type="PhylomeDB" id="Q8ER03"/>
<dbReference type="Proteomes" id="UP000000822">
    <property type="component" value="Chromosome"/>
</dbReference>
<dbReference type="Gene3D" id="1.10.10.10">
    <property type="entry name" value="Winged helix-like DNA-binding domain superfamily/Winged helix DNA-binding domain"/>
    <property type="match status" value="1"/>
</dbReference>
<dbReference type="HAMAP" id="MF_00245">
    <property type="entry name" value="UPF0122"/>
    <property type="match status" value="1"/>
</dbReference>
<dbReference type="InterPro" id="IPR013324">
    <property type="entry name" value="RNA_pol_sigma_r3/r4-like"/>
</dbReference>
<dbReference type="InterPro" id="IPR007394">
    <property type="entry name" value="UPF0122"/>
</dbReference>
<dbReference type="InterPro" id="IPR054831">
    <property type="entry name" value="UPF0122_fam_protein"/>
</dbReference>
<dbReference type="InterPro" id="IPR036388">
    <property type="entry name" value="WH-like_DNA-bd_sf"/>
</dbReference>
<dbReference type="NCBIfam" id="NF001068">
    <property type="entry name" value="PRK00118.1-4"/>
    <property type="match status" value="1"/>
</dbReference>
<dbReference type="NCBIfam" id="NF001070">
    <property type="entry name" value="PRK00118.1-6"/>
    <property type="match status" value="1"/>
</dbReference>
<dbReference type="NCBIfam" id="NF045758">
    <property type="entry name" value="YlxM"/>
    <property type="match status" value="1"/>
</dbReference>
<dbReference type="PANTHER" id="PTHR40083">
    <property type="entry name" value="UPF0122 PROTEIN CBO2450/CLC_2298"/>
    <property type="match status" value="1"/>
</dbReference>
<dbReference type="PANTHER" id="PTHR40083:SF1">
    <property type="entry name" value="UPF0122 PROTEIN YLXM"/>
    <property type="match status" value="1"/>
</dbReference>
<dbReference type="Pfam" id="PF04297">
    <property type="entry name" value="UPF0122"/>
    <property type="match status" value="1"/>
</dbReference>
<dbReference type="SUPFAM" id="SSF88659">
    <property type="entry name" value="Sigma3 and sigma4 domains of RNA polymerase sigma factors"/>
    <property type="match status" value="1"/>
</dbReference>
<reference key="1">
    <citation type="journal article" date="2002" name="Nucleic Acids Res.">
        <title>Genome sequence of Oceanobacillus iheyensis isolated from the Iheya Ridge and its unexpected adaptive capabilities to extreme environments.</title>
        <authorList>
            <person name="Takami H."/>
            <person name="Takaki Y."/>
            <person name="Uchiyama I."/>
        </authorList>
    </citation>
    <scope>NUCLEOTIDE SEQUENCE [LARGE SCALE GENOMIC DNA]</scope>
    <source>
        <strain>DSM 14371 / CIP 107618 / JCM 11309 / KCTC 3954 / HTE831</strain>
    </source>
</reference>
<organism>
    <name type="scientific">Oceanobacillus iheyensis (strain DSM 14371 / CIP 107618 / JCM 11309 / KCTC 3954 / HTE831)</name>
    <dbReference type="NCBI Taxonomy" id="221109"/>
    <lineage>
        <taxon>Bacteria</taxon>
        <taxon>Bacillati</taxon>
        <taxon>Bacillota</taxon>
        <taxon>Bacilli</taxon>
        <taxon>Bacillales</taxon>
        <taxon>Bacillaceae</taxon>
        <taxon>Oceanobacillus</taxon>
    </lineage>
</organism>